<sequence length="727" mass="83112">MSFNFSRYSGAYTTTFSFLLLALLIVSAVLLSRPYAPALLHAEEAYCVSMSCVTAAASVLSLMDATADPCSDFYQYACGGWVRANPIPDTKSMWGTFVKLEQQNQLVIKNVLEQPMSEFKSEAERKAKLYYMSCLDVNDTIETLGPKPMLDLLVKIGGWNITGNFSIKNWSLQKSLETLQNRYNMGGLFTWAVGEDDRDSKKHIIQIDQGGLTLPTRDNYLNETMDDKVLSAYLEYMTKIGVLLGGEEKNVRTQMKAVIEFETELAKIMSPQEDRRDEEKLYNNMELDKVQGRPPFINWHAFFSNAMENITRKISKKEKVVVYAPEYLEKLNDIIRNYTNTTDGKIILNNYLVWQTVRSMTSYLSKAFRDAYKGLRKALVGSEGGEKPWRYCVTDTNNVIGFAIGAMFVREAFHGNSKPAAENMINQIRTAFKSNLKNLKWMDAETRRAAEKKADAISDMIGFPDYILNPEELDKKYKDLEIKEDEYFENNLRVNKYNLKSNLEKLDQPVNKTRWGMTPPTVNAYYTPTKNQIVFPAGILQAPFYDIGHPKSMNYGAMGVVMGHELTHAFDDQGREYDQNGNLHKWWNNQTIEAFKKRTQCVVDQYSNYTVDNKHVNGKQTLGENIADNGGLKAAYHAYLEWEQRNPRELPLPGLNFSHKQLFFLSFAQVWCSASTDEAIKLQLEKDPHAPPKFRVIGPLSNLQEFSTEFRCPLGSKMNPVHKCEVW</sequence>
<proteinExistence type="evidence at transcript level"/>
<keyword id="KW-1003">Cell membrane</keyword>
<keyword id="KW-1015">Disulfide bond</keyword>
<keyword id="KW-0325">Glycoprotein</keyword>
<keyword id="KW-0378">Hydrolase</keyword>
<keyword id="KW-0472">Membrane</keyword>
<keyword id="KW-0479">Metal-binding</keyword>
<keyword id="KW-0482">Metalloprotease</keyword>
<keyword id="KW-0645">Protease</keyword>
<keyword id="KW-0735">Signal-anchor</keyword>
<keyword id="KW-0812">Transmembrane</keyword>
<keyword id="KW-1133">Transmembrane helix</keyword>
<keyword id="KW-0862">Zinc</keyword>
<dbReference type="EC" id="3.4.24.-" evidence="1"/>
<dbReference type="EMBL" id="AY149919">
    <property type="protein sequence ID" value="AAN73018.1"/>
    <property type="molecule type" value="mRNA"/>
</dbReference>
<dbReference type="SMR" id="Q8IS64"/>
<dbReference type="MEROPS" id="M13.A14"/>
<dbReference type="GO" id="GO:0005886">
    <property type="term" value="C:plasma membrane"/>
    <property type="evidence" value="ECO:0000250"/>
    <property type="project" value="UniProtKB"/>
</dbReference>
<dbReference type="GO" id="GO:0004175">
    <property type="term" value="F:endopeptidase activity"/>
    <property type="evidence" value="ECO:0000250"/>
    <property type="project" value="UniProtKB"/>
</dbReference>
<dbReference type="GO" id="GO:0004222">
    <property type="term" value="F:metalloendopeptidase activity"/>
    <property type="evidence" value="ECO:0007669"/>
    <property type="project" value="InterPro"/>
</dbReference>
<dbReference type="GO" id="GO:0008270">
    <property type="term" value="F:zinc ion binding"/>
    <property type="evidence" value="ECO:0000250"/>
    <property type="project" value="UniProtKB"/>
</dbReference>
<dbReference type="GO" id="GO:0016485">
    <property type="term" value="P:protein processing"/>
    <property type="evidence" value="ECO:0007669"/>
    <property type="project" value="TreeGrafter"/>
</dbReference>
<dbReference type="CDD" id="cd08662">
    <property type="entry name" value="M13"/>
    <property type="match status" value="1"/>
</dbReference>
<dbReference type="FunFam" id="3.40.390.10:FF:000076">
    <property type="entry name" value="membrane metallo-endopeptidase-like 1"/>
    <property type="match status" value="1"/>
</dbReference>
<dbReference type="Gene3D" id="3.40.390.10">
    <property type="entry name" value="Collagenase (Catalytic Domain)"/>
    <property type="match status" value="1"/>
</dbReference>
<dbReference type="Gene3D" id="1.10.1380.10">
    <property type="entry name" value="Neutral endopeptidase , domain2"/>
    <property type="match status" value="1"/>
</dbReference>
<dbReference type="InterPro" id="IPR024079">
    <property type="entry name" value="MetalloPept_cat_dom_sf"/>
</dbReference>
<dbReference type="InterPro" id="IPR000718">
    <property type="entry name" value="Peptidase_M13"/>
</dbReference>
<dbReference type="InterPro" id="IPR018497">
    <property type="entry name" value="Peptidase_M13_C"/>
</dbReference>
<dbReference type="InterPro" id="IPR042089">
    <property type="entry name" value="Peptidase_M13_dom_2"/>
</dbReference>
<dbReference type="InterPro" id="IPR008753">
    <property type="entry name" value="Peptidase_M13_N"/>
</dbReference>
<dbReference type="PANTHER" id="PTHR11733:SF167">
    <property type="entry name" value="FI17812P1-RELATED"/>
    <property type="match status" value="1"/>
</dbReference>
<dbReference type="PANTHER" id="PTHR11733">
    <property type="entry name" value="ZINC METALLOPROTEASE FAMILY M13 NEPRILYSIN-RELATED"/>
    <property type="match status" value="1"/>
</dbReference>
<dbReference type="Pfam" id="PF01431">
    <property type="entry name" value="Peptidase_M13"/>
    <property type="match status" value="1"/>
</dbReference>
<dbReference type="Pfam" id="PF05649">
    <property type="entry name" value="Peptidase_M13_N"/>
    <property type="match status" value="1"/>
</dbReference>
<dbReference type="PRINTS" id="PR00786">
    <property type="entry name" value="NEPRILYSIN"/>
</dbReference>
<dbReference type="SUPFAM" id="SSF55486">
    <property type="entry name" value="Metalloproteases ('zincins'), catalytic domain"/>
    <property type="match status" value="1"/>
</dbReference>
<dbReference type="PROSITE" id="PS51885">
    <property type="entry name" value="NEPRILYSIN"/>
    <property type="match status" value="1"/>
</dbReference>
<dbReference type="PROSITE" id="PS00142">
    <property type="entry name" value="ZINC_PROTEASE"/>
    <property type="match status" value="1"/>
</dbReference>
<protein>
    <recommendedName>
        <fullName evidence="9 10">Endothelin-converting enzyme homolog</fullName>
        <shortName evidence="7">ECE</shortName>
        <ecNumber evidence="1">3.4.24.-</ecNumber>
    </recommendedName>
</protein>
<reference evidence="10" key="1">
    <citation type="journal article" date="2003" name="Insect Mol. Biol.">
        <title>An endothelin-converting enzyme homologue in the locust, Locusta migratoria: functional activity, molecular cloning and tissue distribution.</title>
        <authorList>
            <person name="Macours N."/>
            <person name="Poels J."/>
            <person name="Hens K."/>
            <person name="Luciani N."/>
            <person name="De Loof A."/>
            <person name="Huybrechts R."/>
        </authorList>
    </citation>
    <scope>NUCLEOTIDE SEQUENCE [MRNA]</scope>
    <scope>TISSUE SPECIFICITY</scope>
    <source>
        <tissue evidence="7">Brain</tissue>
    </source>
</reference>
<name>ECE_LOCMI</name>
<feature type="chain" id="PRO_0000439041" description="Endothelin-converting enzyme homolog">
    <location>
        <begin position="1"/>
        <end position="727"/>
    </location>
</feature>
<feature type="topological domain" description="Cytoplasmic" evidence="8">
    <location>
        <begin position="1"/>
        <end position="44"/>
    </location>
</feature>
<feature type="transmembrane region" description="Helical; Signal-anchor for type II membrane protein" evidence="2 8">
    <location>
        <begin position="45"/>
        <end position="65"/>
    </location>
</feature>
<feature type="topological domain" description="Extracellular" evidence="8">
    <location>
        <begin position="66"/>
        <end position="727"/>
    </location>
</feature>
<feature type="domain" description="Peptidase M13" evidence="4">
    <location>
        <begin position="46"/>
        <end position="727"/>
    </location>
</feature>
<feature type="active site" evidence="4 5">
    <location>
        <position position="565"/>
    </location>
</feature>
<feature type="active site" description="Proton donor" evidence="4">
    <location>
        <position position="628"/>
    </location>
</feature>
<feature type="binding site" evidence="4 5">
    <location>
        <position position="564"/>
    </location>
    <ligand>
        <name>Zn(2+)</name>
        <dbReference type="ChEBI" id="CHEBI:29105"/>
        <note>catalytic</note>
    </ligand>
</feature>
<feature type="binding site" evidence="4 5">
    <location>
        <position position="568"/>
    </location>
    <ligand>
        <name>Zn(2+)</name>
        <dbReference type="ChEBI" id="CHEBI:29105"/>
        <note>catalytic</note>
    </ligand>
</feature>
<feature type="binding site" evidence="4">
    <location>
        <position position="624"/>
    </location>
    <ligand>
        <name>Zn(2+)</name>
        <dbReference type="ChEBI" id="CHEBI:29105"/>
        <note>catalytic</note>
    </ligand>
</feature>
<feature type="glycosylation site" description="N-linked (GlcNAc...) asparagine" evidence="3">
    <location>
        <position position="138"/>
    </location>
</feature>
<feature type="glycosylation site" description="N-linked (GlcNAc...) asparagine" evidence="3">
    <location>
        <position position="160"/>
    </location>
</feature>
<feature type="glycosylation site" description="N-linked (GlcNAc...) asparagine" evidence="3">
    <location>
        <position position="164"/>
    </location>
</feature>
<feature type="glycosylation site" description="N-linked (GlcNAc...) asparagine" evidence="3">
    <location>
        <position position="169"/>
    </location>
</feature>
<feature type="glycosylation site" description="N-linked (GlcNAc...) asparagine" evidence="3">
    <location>
        <position position="222"/>
    </location>
</feature>
<feature type="glycosylation site" description="N-linked (GlcNAc...) asparagine" evidence="3">
    <location>
        <position position="309"/>
    </location>
</feature>
<feature type="glycosylation site" description="N-linked (GlcNAc...) asparagine" evidence="3">
    <location>
        <position position="337"/>
    </location>
</feature>
<feature type="glycosylation site" description="N-linked (GlcNAc...) asparagine" evidence="3">
    <location>
        <position position="340"/>
    </location>
</feature>
<feature type="glycosylation site" description="N-linked (GlcNAc...) asparagine" evidence="3">
    <location>
        <position position="511"/>
    </location>
</feature>
<feature type="glycosylation site" description="N-linked (GlcNAc...) asparagine" evidence="3">
    <location>
        <position position="589"/>
    </location>
</feature>
<feature type="glycosylation site" description="N-linked (GlcNAc...) asparagine" evidence="3">
    <location>
        <position position="608"/>
    </location>
</feature>
<feature type="glycosylation site" description="N-linked (GlcNAc...) asparagine" evidence="3">
    <location>
        <position position="656"/>
    </location>
</feature>
<feature type="disulfide bond" evidence="4">
    <location>
        <begin position="47"/>
        <end position="52"/>
    </location>
</feature>
<feature type="disulfide bond" evidence="4">
    <location>
        <begin position="70"/>
        <end position="712"/>
    </location>
</feature>
<feature type="disulfide bond" evidence="4">
    <location>
        <begin position="78"/>
        <end position="672"/>
    </location>
</feature>
<feature type="disulfide bond" evidence="4">
    <location>
        <begin position="134"/>
        <end position="392"/>
    </location>
</feature>
<feature type="disulfide bond" evidence="4">
    <location>
        <begin position="601"/>
        <end position="724"/>
    </location>
</feature>
<organism evidence="10">
    <name type="scientific">Locusta migratoria</name>
    <name type="common">Migratory locust</name>
    <dbReference type="NCBI Taxonomy" id="7004"/>
    <lineage>
        <taxon>Eukaryota</taxon>
        <taxon>Metazoa</taxon>
        <taxon>Ecdysozoa</taxon>
        <taxon>Arthropoda</taxon>
        <taxon>Hexapoda</taxon>
        <taxon>Insecta</taxon>
        <taxon>Pterygota</taxon>
        <taxon>Neoptera</taxon>
        <taxon>Polyneoptera</taxon>
        <taxon>Orthoptera</taxon>
        <taxon>Caelifera</taxon>
        <taxon>Acrididea</taxon>
        <taxon>Acridomorpha</taxon>
        <taxon>Acridoidea</taxon>
        <taxon>Acrididae</taxon>
        <taxon>Oedipodinae</taxon>
        <taxon>Locusta</taxon>
    </lineage>
</organism>
<evidence type="ECO:0000250" key="1">
    <source>
        <dbReference type="UniProtKB" id="P42892"/>
    </source>
</evidence>
<evidence type="ECO:0000255" key="2"/>
<evidence type="ECO:0000255" key="3">
    <source>
        <dbReference type="PROSITE-ProRule" id="PRU00498"/>
    </source>
</evidence>
<evidence type="ECO:0000255" key="4">
    <source>
        <dbReference type="PROSITE-ProRule" id="PRU01233"/>
    </source>
</evidence>
<evidence type="ECO:0000255" key="5">
    <source>
        <dbReference type="PROSITE-ProRule" id="PRU10095"/>
    </source>
</evidence>
<evidence type="ECO:0000269" key="6">
    <source>
    </source>
</evidence>
<evidence type="ECO:0000303" key="7">
    <source>
    </source>
</evidence>
<evidence type="ECO:0000305" key="8"/>
<evidence type="ECO:0000305" key="9">
    <source>
    </source>
</evidence>
<evidence type="ECO:0000312" key="10">
    <source>
        <dbReference type="EMBL" id="AAN73018.1"/>
    </source>
</evidence>
<accession>Q8IS64</accession>
<comment type="cofactor">
    <cofactor evidence="1">
        <name>Zn(2+)</name>
        <dbReference type="ChEBI" id="CHEBI:29105"/>
    </cofactor>
</comment>
<comment type="subcellular location">
    <subcellularLocation>
        <location evidence="1">Cell membrane</location>
        <topology evidence="8">Single-pass type II membrane protein</topology>
    </subcellularLocation>
</comment>
<comment type="tissue specificity">
    <text evidence="6">Highly expressed in brain and midgut, and to a lesser extent in fat body, ovaries, testes and haemocytes.</text>
</comment>
<comment type="similarity">
    <text evidence="4 8">Belongs to the peptidase M13 family.</text>
</comment>